<evidence type="ECO:0000250" key="1"/>
<evidence type="ECO:0000255" key="2">
    <source>
        <dbReference type="PROSITE-ProRule" id="PRU00539"/>
    </source>
</evidence>
<proteinExistence type="evidence at transcript level"/>
<organismHost>
    <name type="scientific">Eriophyes pyri</name>
    <name type="common">pearleaf blister mite</name>
    <dbReference type="NCBI Taxonomy" id="483436"/>
</organismHost>
<organismHost>
    <name type="scientific">Sorbus aucuparia</name>
    <name type="common">European mountain ash</name>
    <name type="synonym">Rowan</name>
    <dbReference type="NCBI Taxonomy" id="36599"/>
</organismHost>
<accession>Q6Q305</accession>
<dbReference type="EC" id="2.7.7.48"/>
<dbReference type="EMBL" id="AY563040">
    <property type="protein sequence ID" value="AAS73287.2"/>
    <property type="molecule type" value="mRNA"/>
</dbReference>
<dbReference type="RefSeq" id="YP_003104764.1">
    <property type="nucleotide sequence ID" value="NC_013105.1"/>
</dbReference>
<dbReference type="GeneID" id="8317725"/>
<dbReference type="KEGG" id="vg:8317725"/>
<dbReference type="Proteomes" id="UP000006676">
    <property type="component" value="Genome"/>
</dbReference>
<dbReference type="GO" id="GO:0000166">
    <property type="term" value="F:nucleotide binding"/>
    <property type="evidence" value="ECO:0007669"/>
    <property type="project" value="UniProtKB-KW"/>
</dbReference>
<dbReference type="GO" id="GO:0003968">
    <property type="term" value="F:RNA-directed RNA polymerase activity"/>
    <property type="evidence" value="ECO:0007669"/>
    <property type="project" value="UniProtKB-KW"/>
</dbReference>
<dbReference type="GO" id="GO:0006351">
    <property type="term" value="P:DNA-templated transcription"/>
    <property type="evidence" value="ECO:0007669"/>
    <property type="project" value="InterPro"/>
</dbReference>
<dbReference type="GO" id="GO:0039694">
    <property type="term" value="P:viral RNA genome replication"/>
    <property type="evidence" value="ECO:0007669"/>
    <property type="project" value="InterPro"/>
</dbReference>
<dbReference type="InterPro" id="IPR007099">
    <property type="entry name" value="RNA-dir_pol_NSvirus"/>
</dbReference>
<dbReference type="InterPro" id="IPR007322">
    <property type="entry name" value="RNA_pol_bunyavir"/>
</dbReference>
<dbReference type="Pfam" id="PF04196">
    <property type="entry name" value="Bunya_RdRp"/>
    <property type="match status" value="1"/>
</dbReference>
<dbReference type="PROSITE" id="PS50525">
    <property type="entry name" value="RDRP_SSRNA_NEG_SEG"/>
    <property type="match status" value="1"/>
</dbReference>
<gene>
    <name type="primary">RdRp</name>
</gene>
<keyword id="KW-0547">Nucleotide-binding</keyword>
<keyword id="KW-0548">Nucleotidyltransferase</keyword>
<keyword id="KW-1185">Reference proteome</keyword>
<keyword id="KW-0696">RNA-directed RNA polymerase</keyword>
<keyword id="KW-0808">Transferase</keyword>
<keyword id="KW-0693">Viral RNA replication</keyword>
<organism>
    <name type="scientific">European mountain ash ringspot-associated virus (isolate Sorbus aucuparia)</name>
    <name type="common">EMARAV</name>
    <dbReference type="NCBI Taxonomy" id="1980426"/>
    <lineage>
        <taxon>Viruses</taxon>
        <taxon>Riboviria</taxon>
        <taxon>Orthornavirae</taxon>
        <taxon>Negarnaviricota</taxon>
        <taxon>Polyploviricotina</taxon>
        <taxon>Ellioviricetes</taxon>
        <taxon>Bunyavirales</taxon>
        <taxon>Fimoviridae</taxon>
        <taxon>Emaravirus</taxon>
    </lineage>
</organism>
<comment type="function">
    <text evidence="1">RNA-dependent RNA polymerase which is responsible for replication and transcription of the viral RNA genome.</text>
</comment>
<comment type="catalytic activity">
    <reaction evidence="2">
        <text>RNA(n) + a ribonucleoside 5'-triphosphate = RNA(n+1) + diphosphate</text>
        <dbReference type="Rhea" id="RHEA:21248"/>
        <dbReference type="Rhea" id="RHEA-COMP:14527"/>
        <dbReference type="Rhea" id="RHEA-COMP:17342"/>
        <dbReference type="ChEBI" id="CHEBI:33019"/>
        <dbReference type="ChEBI" id="CHEBI:61557"/>
        <dbReference type="ChEBI" id="CHEBI:140395"/>
        <dbReference type="EC" id="2.7.7.48"/>
    </reaction>
</comment>
<protein>
    <recommendedName>
        <fullName>RNA-directed RNA polymerase L</fullName>
        <shortName>Protein L</shortName>
        <ecNumber>2.7.7.48</ecNumber>
    </recommendedName>
    <alternativeName>
        <fullName>Large structural protein</fullName>
    </alternativeName>
    <alternativeName>
        <fullName>Replicase</fullName>
    </alternativeName>
    <alternativeName>
        <fullName>Transcriptase</fullName>
    </alternativeName>
</protein>
<name>L_EMARV</name>
<sequence length="2293" mass="265654">MENIRKLEAQRRKEYLRAETEIRNNNVFEKDILQKFLHIVGKKQRHYTISSKKKEVQDIFNKCSTNPGFTKDVIDLAERILYAPPNLNQIDFAMTIVSLIEMQRHDDLIHKLNELLVRSGMKVISFEFKLCDHFPFTNSILTPDILFEDPYGSRYILEVKVRNKHTDLEHYYMRYKKVVGVHAKVGVFNLSQSGYMQHGDYKLSEKINLESDDFDDILLCVELAGKIREKYIQYPQYFLYTLQSEVTNPDSFLDGFKTRLSDLSMFEEIKSGFGDYWNDITYHMDNYSLIDNHDEVTEDLLNSTDDLTQYCNDLYDEFLDHSQSYSRQGKYGKTILRNSGLDNIIDKKNRSKYTITSKLKPSVYIPITKTIKLDTYGGSRLKFYKDAFINIKCTGDSYSRSAYNLVDNVFNTSSIDLLMTKDDKIDPSLYYEVLDPGFIAHLHDDQVKYKKIAKVTNITSDMTILANNSFSIHCHTDQRLKDNICGYDKKHYDSTQKAKECLDFSNSSLLLPSLGVHLSAIFKSEHHAGVYWNDLVTLGTDNLNHMTSDIPEEAQTKFLEHLYNSHIIFKAIISLNTINSHKFRLLQSPDPGTIIILLPNSDGLKGAPLRYFVVSILQKQDNDSIEANKLLGIYHSHTESKKYKIMLSKVISLDITRLKLLSNSFVKYSLLISYYSQFKKSLKFDTHMLSWMLSQVTTIASLSITDVYKNFIMAIYSDYSNIDDLINDKLECRPRTLGHVFVMKHLFQGITSAVEQLGKINKNKLIADVNDEGELISTGFDPNLRLKLPISQLSTNNPKEIIHESFILFYLGNKGLHGSPQELLNLYYTPMQFESEYTKMMTDCGLYCQELGNNGNLSFSFQAMFLTSKVAYAKLLNNTDEIRRSLVKEMKMDEPIMSIKQFSSTKSMVSNSVPDMSIKDCNLNKNIDVIQLERYIDTSLISDPMKYITLMNNSIESINQERLLIYKDKLNKGIVLLPKLILTTFKGKSFIGLENHYYTKLVSGDYIKQTNTKVFDEFYRLTDEIQEEKLRGFYKGYITEGDLLVRIFNKDQRTTDDREIYTGNAQVRLCLYPLEMTFKSICKKIPEEAITISGDQKQRKLLEQRLALIKTKRQFNKSGYKTEIYSVSSDASKWSARDLLPKFIISIATNPYLTSDEKYFLVYLLVRYYDKKIVLTDSAFSNALRFSREDINGKYEEMTNNFTQNWFNVRSNWLQGNLNMTSSFVHHCSTIMTDTLLSISAKHNGFEAVMTSMVHSDDSTYDFLIAKNSKTSSYINNEANMGRFIISLITYSNKKHCITLNEKKTYISTFYKEFLSTTIVSNELFFFYMADLMPISSDTSYKSPLEDLASYTGYINNSFSHACPIQILKCAITLLNHLTLSTYNMQYTSEKNPRCNIPNSTDLPIQIYPRYKLPLSLAGCIPYYSSDAYNILDDIIKTLEKNKVIKNSLLEDVIDDETLDEYITLVNKQKPEYAKYIQACLLTMDYTQYERDDEDPYNIVDYDLSQKSIINVASINKGSRIKKTYTYKKYLENETDIRLTSCVNPMWCISKPKDEVLIKNPILANYMNPNFKDSLIFSKSALDYGRRIIGSNKSMDTLSSHAFEKEKKQGIKTIYKKLDDKISTVEISKQSLQRFLECIYSVIKKSLVALQVYYSKVQVLVKTRPEFTKVIMPRSVYAEEYGKNSNTSMVENLLVEQYCEIEQVDSKVEKFISFCKHVLQRCGDIKIYRDPEDIDDDFRKYIEFKYTLKDATMGLIQPHQHLAEYAFDVYNNKLIFQGLMVRYYIDICETISNPSYNIPSYTSPNSIIMTLDSLMKRDEISSKIYISHIRTNRFDEYWLSRFGMYVYENYFVKYKLGYRIKIAANEKLMPTMKKVRNLREPFKFICSLVANDPSLFIQMTESPDFQISGWKYSDIIAEMKSTTDFSYNLFLYMMNEINFQTLMRVMNLNRRVWNHWLMKTDSEPSDPNASIALYMYQSTVVKVQTKTIGGGVTFSMLLLRHGMQHRQAFDEISKKIASDYAPQLRIANITPQTSFGRLQFCVNEYGRTVKPGSYRSSCICNVNIAALTDLKPDIAYKENTINQIVTIISPTFEGEFVFKLNTYCDSEYYTCVMLENLDLNRVMILDHLCRGKYLIENPEYFTEISDQITPGACLALFSNNVNNKLWSNTIDTSKFAKLVHIGNYLKTEHEASIVTKLCDSLVAICALNGIDHTLSLKPDNFIKSLRQYKLSYGFHEEFYNNYKKNEREPYTELIMAIASTAGDPFQKVILAIITIFKAYTDLFISYKTDEVEF</sequence>
<feature type="chain" id="PRO_0000395604" description="RNA-directed RNA polymerase L">
    <location>
        <begin position="1"/>
        <end position="2293"/>
    </location>
</feature>
<feature type="domain" description="RdRp catalytic" evidence="2">
    <location>
        <begin position="1111"/>
        <end position="1297"/>
    </location>
</feature>
<reference key="1">
    <citation type="journal article" date="2005" name="Arch. Virol.">
        <title>Double-stranded RNA pattern and partial sequence data indicate plant virus infection associated with the ringspot disease of European mountain ash (Sorbus aucuparia L.).</title>
        <authorList>
            <person name="Benthack W."/>
            <person name="Mielke N."/>
            <person name="Buttner C."/>
            <person name="Muhlbach H.P."/>
        </authorList>
    </citation>
    <scope>NUCLEOTIDE SEQUENCE [GENOMIC RNA]</scope>
</reference>
<reference key="2">
    <citation type="journal article" date="2007" name="J. Gen. Virol.">
        <title>A novel, multipartite, negative-strand RNA virus is associated with the ringspot disease of European mountain ash (Sorbus aucuparia L.).</title>
        <authorList>
            <person name="Mielke N."/>
            <person name="Muehlbach H.P."/>
        </authorList>
    </citation>
    <scope>NUCLEOTIDE SEQUENCE [GENOMIC RNA]</scope>
</reference>
<reference key="3">
    <citation type="submission" date="2006-08" db="EMBL/GenBank/DDBJ databases">
        <authorList>
            <person name="Mielke N."/>
            <person name="Muehlbach H.-P."/>
        </authorList>
    </citation>
    <scope>NUCLEOTIDE SEQUENCE [GENOMIC RNA]</scope>
</reference>